<keyword id="KW-0002">3D-structure</keyword>
<keyword id="KW-0066">ATP synthesis</keyword>
<keyword id="KW-0067">ATP-binding</keyword>
<keyword id="KW-0139">CF(1)</keyword>
<keyword id="KW-0903">Direct protein sequencing</keyword>
<keyword id="KW-0375">Hydrogen ion transport</keyword>
<keyword id="KW-0406">Ion transport</keyword>
<keyword id="KW-0472">Membrane</keyword>
<keyword id="KW-0496">Mitochondrion</keyword>
<keyword id="KW-0999">Mitochondrion inner membrane</keyword>
<keyword id="KW-0547">Nucleotide-binding</keyword>
<keyword id="KW-0809">Transit peptide</keyword>
<keyword id="KW-0813">Transport</keyword>
<comment type="function">
    <text evidence="3 4 5 8">Mitochondrial membrane ATP synthase (F(1)F(o) ATP synthase) produces ATP from ADP in the presence of a proton gradient across the membrane which is generated by electron transport complexes of the respiratory chain (PubMed:19436713, PubMed:29247468). F-type ATPases consist of two structural domains, F(1) - containing the extramembraneous catalytic core, and F(o) - containing the membrane proton channel, linked together by a central stalk and a peripheral stalk (PubMed:19436713, PubMed:29247468, PubMed:29440423). During catalysis, ATP synthesis in the catalytic domain of F(1) is coupled via a rotary mechanism of the central stalk subunits to proton translocation. Subunits alpha and beta form the catalytic core in F(1) (PubMed:19436713, PubMed:29440423). Rotation of the central stalk against the surrounding alpha(3)beta(3) subunits leads to hydrolysis of ATP in three separate catalytic sites on the beta subunits (Probable). Subunit alpha does not bear the catalytic high-affinity ATP-binding sites (PubMed:29440423). Contrary to the procyclic, insect form that requires F(1)F(o) ATP synthase for ATP synthesis, the bloodstream form relies on ATP hydrolysis by F(1)F(o) ATP synthase to maintain its mitochondrial membrane potential (PubMed:29247468).</text>
</comment>
<comment type="subunit">
    <text evidence="3 4 5">F-type ATPases have 2 components, F(1) - the catalytic core - and F(o) - the membrane proton channel. F(1) has five subunits: alpha(3), beta(3), gamma(1), delta(1), epsilon(1), plus the additional subunit P18 (Tb427.05.1710) that is not present in F(1)F(o) ATP synthase from metazoa (PubMed:19436713, PubMed:29247468, PubMed:29440423). Subunit P18 (Tb927.5.1710) interacts with the alpha subunit with a 1:1 stoichiometry; the interaction is direct (PubMed:29440423). Subunit gamma is part of the central stalk (PubMed:29440423). F(o) has three main subunits: a, b and c (PubMed:19436713). The trypanosomal ATPase complex contains additional subunits that are not present in the F(1)F(o) ATP synthase from metazoa (PubMed:19436713, PubMed:29247468, PubMed:29440423).</text>
</comment>
<comment type="subcellular location">
    <subcellularLocation>
        <location>Mitochondrion</location>
    </subcellularLocation>
    <subcellularLocation>
        <location evidence="2 3 4 5">Mitochondrion inner membrane</location>
        <topology evidence="2 3 4 5">Peripheral membrane protein</topology>
        <orientation evidence="9 10 11">Matrix side</orientation>
    </subcellularLocation>
</comment>
<comment type="disruption phenotype">
    <text evidence="3 4">RNAi-mediated knockdown of the protein in procyclic, insect stage cells impairs assembly of the F(1) component and slows the proliferation rate of procyclic cells that are cultivated in vitro, both in the presence and in the absence of glucose in the growth medium. ATP synthesis by oxidative phosphorylation is dramatically reduced in procyclic cells.</text>
</comment>
<comment type="similarity">
    <text evidence="8">Belongs to the ATPase alpha/beta chains family.</text>
</comment>
<sequence length="584" mass="63503">MRRFGSKFASGLASRCALACPLASAATAPAGASTTSSTSSAQKSFFKTTEMIGYVHSIDGTIATLIPAPGNPGVAYNTIIQIQVSPTTFAAGLVFNLEKDGRIGIILMDNITEVQSGQKVMATGQLLHIPVGAGVLGKVVNPLGHEVPVGLVTRSRRLLDSTLGKVDTGAPNIVSRSPVNYNLLTGFKAVDTMIPIGRGQRELIVGDRQTGKTSIAVSTIINQVRINQQILSKNAVISIYVSIGQRCSNVARIHRLLQSYGALRYTTVMAATAAEPAGLQYLAPYAGVTMGEYFMNRGRHCLCVYDDLSKQAVAYRQISLLLRRPPGREAYPGDVFYLHSRLLERAAMLSPGKGGGSVTALPIVETLSNDVTAYIVTNVISITDGQIYLDTKLFTGGQRPAVNIGLSVSRVGSSAQNAAMKGVAGKLKGILAEYRKLAADSVGGQQVQTIPMIRGARFVALFNQKQPSYFMNAIVSLYACLNGYLDDVKVQYVKFYEYLLVHRDLGIMYGTAKNKFFYMYVQELNYLIRFFTLNSPILHGELEEMLKQHTHLFLQHYQSKMNAIKSEKDVKALKNLLYSCKRAV</sequence>
<accession>Q9GS23</accession>
<accession>A0A2U3T1N3</accession>
<protein>
    <recommendedName>
        <fullName evidence="9">ATP synthase subunit alpha, mitochondrial</fullName>
    </recommendedName>
    <alternativeName>
        <fullName evidence="7">ATP synthase F1 subunit alpha</fullName>
    </alternativeName>
</protein>
<feature type="transit peptide" description="Mitochondrion" evidence="4">
    <location>
        <begin position="1"/>
        <end position="24"/>
    </location>
</feature>
<feature type="chain" id="PRO_5004326611" description="ATP synthase subunit alpha, mitochondrial">
    <location>
        <begin position="25"/>
        <end position="584"/>
    </location>
</feature>
<feature type="binding site" evidence="5 13">
    <location>
        <begin position="207"/>
        <end position="214"/>
    </location>
    <ligand>
        <name>ATP</name>
        <dbReference type="ChEBI" id="CHEBI:30616"/>
    </ligand>
</feature>
<feature type="binding site" evidence="5 13">
    <location>
        <position position="464"/>
    </location>
    <ligand>
        <name>ATP</name>
        <dbReference type="ChEBI" id="CHEBI:30616"/>
    </ligand>
</feature>
<feature type="site" description="Cleavage" evidence="2 4">
    <location>
        <begin position="159"/>
        <end position="160"/>
    </location>
</feature>
<feature type="site" description="Required for activity" evidence="1">
    <location>
        <position position="407"/>
    </location>
</feature>
<feature type="sequence conflict" description="In Ref. 1; AAG23339." ref="1">
    <original>V</original>
    <variation>CN</variation>
    <location>
        <position position="205"/>
    </location>
</feature>
<feature type="sequence conflict" description="In Ref. 1; AAG23339." ref="1">
    <original>Q</original>
    <variation>H</variation>
    <location>
        <position position="466"/>
    </location>
</feature>
<evidence type="ECO:0000255" key="1">
    <source>
        <dbReference type="PROSITE-ProRule" id="PRU10106"/>
    </source>
</evidence>
<evidence type="ECO:0000269" key="2">
    <source>
    </source>
</evidence>
<evidence type="ECO:0000269" key="3">
    <source>
    </source>
</evidence>
<evidence type="ECO:0000269" key="4">
    <source>
    </source>
</evidence>
<evidence type="ECO:0000269" key="5">
    <source>
    </source>
</evidence>
<evidence type="ECO:0000303" key="6">
    <source>
    </source>
</evidence>
<evidence type="ECO:0000303" key="7">
    <source>
    </source>
</evidence>
<evidence type="ECO:0000305" key="8"/>
<evidence type="ECO:0000305" key="9">
    <source>
    </source>
</evidence>
<evidence type="ECO:0000305" key="10">
    <source>
    </source>
</evidence>
<evidence type="ECO:0000305" key="11">
    <source>
    </source>
</evidence>
<evidence type="ECO:0000312" key="12">
    <source>
        <dbReference type="EMBL" id="AAG23339.1"/>
    </source>
</evidence>
<evidence type="ECO:0007744" key="13">
    <source>
        <dbReference type="PDB" id="6F5D"/>
    </source>
</evidence>
<gene>
    <name type="ORF">Tb427.07.7420</name>
    <name evidence="7" type="ORF">Tb427.07.7430</name>
</gene>
<name>ATPA_TRYBB</name>
<reference evidence="12" key="1">
    <citation type="journal article" date="2001" name="Mol. Biochem. Parasitol.">
        <title>Cloning and characterization of the subunits comprising the catalytic core of the Trypanosoma brucei mitochondrial ATP synthase.</title>
        <authorList>
            <person name="Brown S.V."/>
            <person name="Stanislawski A."/>
            <person name="Perry Q.L."/>
            <person name="Williams N."/>
        </authorList>
    </citation>
    <scope>NUCLEOTIDE SEQUENCE [MRNA]</scope>
    <scope>PROTEIN SEQUENCE OF 160-175</scope>
    <scope>SUBCELLULAR LOCATION</scope>
    <scope>SUBUNIT</scope>
    <scope>PROTEOLYTIC CLEAVAGE</scope>
    <source>
        <strain evidence="6">Treu 667</strain>
    </source>
</reference>
<reference key="2">
    <citation type="journal article" date="2018" name="Proc. Natl. Acad. Sci. U.S.A.">
        <title>ATP synthase from Trypanosoma brucei has an elaborated canonical F1-domain and conventional catalytic sites.</title>
        <authorList>
            <person name="Montgomery M.G."/>
            <person name="Gahura O."/>
            <person name="Leslie A.G.W."/>
            <person name="Zikova A."/>
            <person name="Walker J.E."/>
        </authorList>
    </citation>
    <scope>NUCLEOTIDE SEQUENCE [GENOMIC DNA]</scope>
    <scope>X-RAY CRYSTALLOGRAPHY (3.2 ANGSTROMS) OF 25-584 IN COMPLEX WITH ADP</scope>
    <scope>FUNCTION</scope>
    <scope>SUBUNIT</scope>
    <scope>SUBCELLULAR LOCATION</scope>
    <source>
        <strain>427</strain>
    </source>
</reference>
<reference key="3">
    <citation type="journal article" date="2009" name="PLoS Pathog.">
        <title>The F(0)F(1)-ATP synthase complex contains novel subunits and is essential for procyclic Trypanosoma brucei.</title>
        <authorList>
            <person name="Zikova A."/>
            <person name="Schnaufer A."/>
            <person name="Dalley R.A."/>
            <person name="Panigrahi A.K."/>
            <person name="Stuart K.D."/>
        </authorList>
    </citation>
    <scope>FUNCTION</scope>
    <scope>SUBCELLULAR LOCATION</scope>
    <scope>SUBUNIT</scope>
    <scope>IDENTIFICATION BY MASS SPECTROMETRY</scope>
    <scope>DISRUPTION PHENOTYPE</scope>
    <scope>NOMENCLATURE</scope>
    <source>
        <strain>427</strain>
    </source>
</reference>
<reference key="4">
    <citation type="journal article" date="2018" name="FEBS J.">
        <title>The F1-ATPase from Trypanosoma brucei is elaborated by three copies of an additional p18-subunit.</title>
        <authorList>
            <person name="Gahura O."/>
            <person name="Subrtova K."/>
            <person name="Vachova H."/>
            <person name="Panicucci B."/>
            <person name="Fearnley I.M."/>
            <person name="Harbour M.E."/>
            <person name="Walker J.E."/>
            <person name="Zikova A."/>
        </authorList>
    </citation>
    <scope>FUNCTION</scope>
    <scope>DISRUPTION PHENOTYPE</scope>
    <scope>PROTEIN SEQUENCE OF 25-29 AND 160-165</scope>
    <scope>SUBCELLULAR LOCATION</scope>
    <scope>SUBUNIT</scope>
    <scope>IDENTIFICATION BY MASS SPECTROMETRY</scope>
    <scope>PROTEOLYTIC CLEAVAGE</scope>
    <source>
        <strain>427</strain>
    </source>
</reference>
<dbReference type="EMBL" id="AY007705">
    <property type="protein sequence ID" value="AAG23339.1"/>
    <property type="molecule type" value="mRNA"/>
</dbReference>
<dbReference type="EMBL" id="LS423643">
    <property type="protein sequence ID" value="SPS16789.1"/>
    <property type="molecule type" value="Genomic_DNA"/>
</dbReference>
<dbReference type="PDB" id="6F5D">
    <property type="method" value="X-ray"/>
    <property type="resolution" value="3.20 A"/>
    <property type="chains" value="A/B/C=25-584"/>
</dbReference>
<dbReference type="PDB" id="8AP6">
    <property type="method" value="EM"/>
    <property type="resolution" value="3.20 A"/>
    <property type="chains" value="A1/A2/B1/B2/C1/C2=1-584"/>
</dbReference>
<dbReference type="PDB" id="8APA">
    <property type="method" value="EM"/>
    <property type="resolution" value="3.70 A"/>
    <property type="chains" value="A1/B1/C1=1-584"/>
</dbReference>
<dbReference type="PDB" id="8APB">
    <property type="method" value="EM"/>
    <property type="resolution" value="3.80 A"/>
    <property type="chains" value="A1/B1/C1=1-584"/>
</dbReference>
<dbReference type="PDB" id="8APC">
    <property type="method" value="EM"/>
    <property type="resolution" value="3.50 A"/>
    <property type="chains" value="A1/B1/C1=1-584"/>
</dbReference>
<dbReference type="PDB" id="8APD">
    <property type="method" value="EM"/>
    <property type="resolution" value="3.70 A"/>
    <property type="chains" value="A1/B1/C1=1-584"/>
</dbReference>
<dbReference type="PDB" id="8APE">
    <property type="method" value="EM"/>
    <property type="resolution" value="3.70 A"/>
    <property type="chains" value="A1/B1/C1=1-584"/>
</dbReference>
<dbReference type="PDB" id="8APF">
    <property type="method" value="EM"/>
    <property type="resolution" value="4.30 A"/>
    <property type="chains" value="A1/B1/C1=1-584"/>
</dbReference>
<dbReference type="PDB" id="8APG">
    <property type="method" value="EM"/>
    <property type="resolution" value="3.50 A"/>
    <property type="chains" value="A1/B1/C1=1-584"/>
</dbReference>
<dbReference type="PDB" id="8APH">
    <property type="method" value="EM"/>
    <property type="resolution" value="3.80 A"/>
    <property type="chains" value="A1/B1/C1=1-584"/>
</dbReference>
<dbReference type="PDB" id="8APJ">
    <property type="method" value="EM"/>
    <property type="resolution" value="3.80 A"/>
    <property type="chains" value="A1/B1/C1=1-584"/>
</dbReference>
<dbReference type="PDB" id="8APK">
    <property type="method" value="EM"/>
    <property type="resolution" value="3.70 A"/>
    <property type="chains" value="A1/B1/C1=1-584"/>
</dbReference>
<dbReference type="PDBsum" id="6F5D"/>
<dbReference type="PDBsum" id="8AP6"/>
<dbReference type="PDBsum" id="8APA"/>
<dbReference type="PDBsum" id="8APB"/>
<dbReference type="PDBsum" id="8APC"/>
<dbReference type="PDBsum" id="8APD"/>
<dbReference type="PDBsum" id="8APE"/>
<dbReference type="PDBsum" id="8APF"/>
<dbReference type="PDBsum" id="8APG"/>
<dbReference type="PDBsum" id="8APH"/>
<dbReference type="PDBsum" id="8APJ"/>
<dbReference type="PDBsum" id="8APK"/>
<dbReference type="EMDB" id="EMD-15559"/>
<dbReference type="EMDB" id="EMD-15563"/>
<dbReference type="EMDB" id="EMD-15564"/>
<dbReference type="EMDB" id="EMD-15565"/>
<dbReference type="EMDB" id="EMD-15566"/>
<dbReference type="EMDB" id="EMD-15567"/>
<dbReference type="EMDB" id="EMD-15568"/>
<dbReference type="EMDB" id="EMD-15570"/>
<dbReference type="EMDB" id="EMD-15571"/>
<dbReference type="EMDB" id="EMD-15572"/>
<dbReference type="EMDB" id="EMD-15573"/>
<dbReference type="SMR" id="Q9GS23"/>
<dbReference type="TCDB" id="3.A.2.1.13">
    <property type="family name" value="the h+- or na+-translocating f-type, v-type and a-type atpase (f-atpase) superfamily"/>
</dbReference>
<dbReference type="OMA" id="INQRDNW"/>
<dbReference type="GO" id="GO:0005743">
    <property type="term" value="C:mitochondrial inner membrane"/>
    <property type="evidence" value="ECO:0007669"/>
    <property type="project" value="UniProtKB-SubCell"/>
</dbReference>
<dbReference type="GO" id="GO:0045259">
    <property type="term" value="C:proton-transporting ATP synthase complex"/>
    <property type="evidence" value="ECO:0007669"/>
    <property type="project" value="UniProtKB-KW"/>
</dbReference>
<dbReference type="GO" id="GO:0043531">
    <property type="term" value="F:ADP binding"/>
    <property type="evidence" value="ECO:0007669"/>
    <property type="project" value="TreeGrafter"/>
</dbReference>
<dbReference type="GO" id="GO:0005524">
    <property type="term" value="F:ATP binding"/>
    <property type="evidence" value="ECO:0007669"/>
    <property type="project" value="UniProtKB-KW"/>
</dbReference>
<dbReference type="GO" id="GO:0046933">
    <property type="term" value="F:proton-transporting ATP synthase activity, rotational mechanism"/>
    <property type="evidence" value="ECO:0007669"/>
    <property type="project" value="InterPro"/>
</dbReference>
<dbReference type="CDD" id="cd01132">
    <property type="entry name" value="F1-ATPase_alpha_CD"/>
    <property type="match status" value="1"/>
</dbReference>
<dbReference type="FunFam" id="3.40.50.300:FF:000002">
    <property type="entry name" value="ATP synthase subunit alpha"/>
    <property type="match status" value="1"/>
</dbReference>
<dbReference type="FunFam" id="3.40.50.12240:FF:000004">
    <property type="entry name" value="F-type H+-transporting ATPase subunit alpha"/>
    <property type="match status" value="1"/>
</dbReference>
<dbReference type="Gene3D" id="3.40.50.12240">
    <property type="match status" value="1"/>
</dbReference>
<dbReference type="InterPro" id="IPR000793">
    <property type="entry name" value="ATP_synth_asu_C"/>
</dbReference>
<dbReference type="InterPro" id="IPR033732">
    <property type="entry name" value="ATP_synth_F1_a_nt-bd_dom"/>
</dbReference>
<dbReference type="InterPro" id="IPR005294">
    <property type="entry name" value="ATP_synth_F1_asu"/>
</dbReference>
<dbReference type="InterPro" id="IPR020003">
    <property type="entry name" value="ATPase_a/bsu_AS"/>
</dbReference>
<dbReference type="InterPro" id="IPR000194">
    <property type="entry name" value="ATPase_F1/V1/A1_a/bsu_nucl-bd"/>
</dbReference>
<dbReference type="InterPro" id="IPR027417">
    <property type="entry name" value="P-loop_NTPase"/>
</dbReference>
<dbReference type="NCBIfam" id="TIGR00962">
    <property type="entry name" value="atpA"/>
    <property type="match status" value="1"/>
</dbReference>
<dbReference type="PANTHER" id="PTHR48082">
    <property type="entry name" value="ATP SYNTHASE SUBUNIT ALPHA, MITOCHONDRIAL"/>
    <property type="match status" value="1"/>
</dbReference>
<dbReference type="PANTHER" id="PTHR48082:SF2">
    <property type="entry name" value="ATP SYNTHASE SUBUNIT ALPHA, MITOCHONDRIAL"/>
    <property type="match status" value="1"/>
</dbReference>
<dbReference type="Pfam" id="PF00006">
    <property type="entry name" value="ATP-synt_ab"/>
    <property type="match status" value="1"/>
</dbReference>
<dbReference type="Pfam" id="PF00306">
    <property type="entry name" value="ATP-synt_ab_C"/>
    <property type="match status" value="1"/>
</dbReference>
<dbReference type="SUPFAM" id="SSF47917">
    <property type="entry name" value="C-terminal domain of alpha and beta subunits of F1 ATP synthase"/>
    <property type="match status" value="1"/>
</dbReference>
<dbReference type="SUPFAM" id="SSF52540">
    <property type="entry name" value="P-loop containing nucleoside triphosphate hydrolases"/>
    <property type="match status" value="1"/>
</dbReference>
<dbReference type="PROSITE" id="PS00152">
    <property type="entry name" value="ATPASE_ALPHA_BETA"/>
    <property type="match status" value="1"/>
</dbReference>
<proteinExistence type="evidence at protein level"/>
<organism evidence="12">
    <name type="scientific">Trypanosoma brucei brucei</name>
    <dbReference type="NCBI Taxonomy" id="5702"/>
    <lineage>
        <taxon>Eukaryota</taxon>
        <taxon>Discoba</taxon>
        <taxon>Euglenozoa</taxon>
        <taxon>Kinetoplastea</taxon>
        <taxon>Metakinetoplastina</taxon>
        <taxon>Trypanosomatida</taxon>
        <taxon>Trypanosomatidae</taxon>
        <taxon>Trypanosoma</taxon>
    </lineage>
</organism>